<geneLocation type="chloroplast"/>
<feature type="chain" id="PRO_0000355913" description="Maturase K">
    <location>
        <begin position="1"/>
        <end position="506"/>
    </location>
</feature>
<evidence type="ECO:0000255" key="1">
    <source>
        <dbReference type="HAMAP-Rule" id="MF_01390"/>
    </source>
</evidence>
<reference key="1">
    <citation type="journal article" date="2007" name="Am. Fern J.">
        <title>The complete plastid genome sequence of Angiopteris evecta (G. Forst.) Hoffm. (Marattiaceae).</title>
        <authorList>
            <person name="Roper J.M."/>
            <person name="Hansen S.K."/>
            <person name="Wolf P.G."/>
            <person name="Karol K.G."/>
            <person name="Mandoli D.F."/>
            <person name="Everett K.D.E."/>
            <person name="Kuehl J.V."/>
            <person name="Boore J.L."/>
        </authorList>
    </citation>
    <scope>NUCLEOTIDE SEQUENCE [LARGE SCALE GENOMIC DNA]</scope>
</reference>
<protein>
    <recommendedName>
        <fullName evidence="1">Maturase K</fullName>
    </recommendedName>
    <alternativeName>
        <fullName evidence="1">Intron maturase</fullName>
    </alternativeName>
</protein>
<accession>A2T310</accession>
<proteinExistence type="inferred from homology"/>
<organism>
    <name type="scientific">Angiopteris evecta</name>
    <name type="common">Mule's foot fern</name>
    <name type="synonym">Polypodium evectum</name>
    <dbReference type="NCBI Taxonomy" id="13825"/>
    <lineage>
        <taxon>Eukaryota</taxon>
        <taxon>Viridiplantae</taxon>
        <taxon>Streptophyta</taxon>
        <taxon>Embryophyta</taxon>
        <taxon>Tracheophyta</taxon>
        <taxon>Polypodiopsida</taxon>
        <taxon>Marattiidae</taxon>
        <taxon>Marattiales</taxon>
        <taxon>Marattiaceae</taxon>
        <taxon>Angiopteris</taxon>
    </lineage>
</organism>
<sequence length="506" mass="61198">MKNRDRILVKIDKLREKRDILCQQRFLYTIPFQEDIYAIAYTRSSKKSNLNLLENSVLYKKYSVITIKRLITQLRQQNFLKIFFRDCYRNQLDNPKNHPYNKLLLEGLILILEVFSPIQIQLGRNEWKSLQSIHSLFLFMENKFLHSNFILDIKIPQSLHPEILIRIFRRRIQDTPFLHLSRSILHEYQDPITSDTSISPFSREQNSLLILLWNYYVYEFEYLVVSSWKRFSRLQSIFSLDRIDRTHFDRKIKHVIRPYWIISSKISSFTKNPCIHYVRYKNHSVLAFQGTNYLAKKWRNYLLNFWQYHFHCWVQPHRIFLKRFSRNSFSFLGYILGIRTRINKVQAKMEDELPITCLITKELCPIIPFLLLVNSLARGGFCTNLGRPVSKLSWTTLTDDDILKKFDQIWRSVYYYYSGSINNHGLFRLRYIFRFSCAKTLACKHKSTTRIVWKRFSLNSFLRSFLKKPELVNSSVSKYYLHKRRFWYLDIIQINPLTISLRERYN</sequence>
<gene>
    <name evidence="1" type="primary">matK</name>
</gene>
<keyword id="KW-0150">Chloroplast</keyword>
<keyword id="KW-0507">mRNA processing</keyword>
<keyword id="KW-0934">Plastid</keyword>
<keyword id="KW-0694">RNA-binding</keyword>
<keyword id="KW-0819">tRNA processing</keyword>
<dbReference type="EMBL" id="DQ821119">
    <property type="protein sequence ID" value="ABG79577.1"/>
    <property type="molecule type" value="Genomic_DNA"/>
</dbReference>
<dbReference type="RefSeq" id="YP_001023678.2">
    <property type="nucleotide sequence ID" value="NC_008829.1"/>
</dbReference>
<dbReference type="SMR" id="A2T310"/>
<dbReference type="GeneID" id="4788244"/>
<dbReference type="GO" id="GO:0009507">
    <property type="term" value="C:chloroplast"/>
    <property type="evidence" value="ECO:0007669"/>
    <property type="project" value="UniProtKB-SubCell"/>
</dbReference>
<dbReference type="GO" id="GO:0003723">
    <property type="term" value="F:RNA binding"/>
    <property type="evidence" value="ECO:0007669"/>
    <property type="project" value="UniProtKB-KW"/>
</dbReference>
<dbReference type="GO" id="GO:0006397">
    <property type="term" value="P:mRNA processing"/>
    <property type="evidence" value="ECO:0007669"/>
    <property type="project" value="UniProtKB-KW"/>
</dbReference>
<dbReference type="GO" id="GO:0008380">
    <property type="term" value="P:RNA splicing"/>
    <property type="evidence" value="ECO:0007669"/>
    <property type="project" value="UniProtKB-UniRule"/>
</dbReference>
<dbReference type="GO" id="GO:0008033">
    <property type="term" value="P:tRNA processing"/>
    <property type="evidence" value="ECO:0007669"/>
    <property type="project" value="UniProtKB-KW"/>
</dbReference>
<dbReference type="HAMAP" id="MF_01390">
    <property type="entry name" value="MatK"/>
    <property type="match status" value="1"/>
</dbReference>
<dbReference type="InterPro" id="IPR024937">
    <property type="entry name" value="Domain_X"/>
</dbReference>
<dbReference type="InterPro" id="IPR002866">
    <property type="entry name" value="Maturase_MatK"/>
</dbReference>
<dbReference type="InterPro" id="IPR024942">
    <property type="entry name" value="Maturase_MatK_N"/>
</dbReference>
<dbReference type="PANTHER" id="PTHR34811">
    <property type="entry name" value="MATURASE K"/>
    <property type="match status" value="1"/>
</dbReference>
<dbReference type="PANTHER" id="PTHR34811:SF1">
    <property type="entry name" value="MATURASE K"/>
    <property type="match status" value="1"/>
</dbReference>
<dbReference type="Pfam" id="PF01348">
    <property type="entry name" value="Intron_maturas2"/>
    <property type="match status" value="1"/>
</dbReference>
<dbReference type="Pfam" id="PF01824">
    <property type="entry name" value="MatK_N"/>
    <property type="match status" value="1"/>
</dbReference>
<name>MATK_ANGEV</name>
<comment type="function">
    <text evidence="1">Usually encoded in the trnK tRNA gene intron. Probably assists in splicing its own and other chloroplast group II introns.</text>
</comment>
<comment type="subcellular location">
    <subcellularLocation>
        <location>Plastid</location>
        <location>Chloroplast</location>
    </subcellularLocation>
</comment>
<comment type="similarity">
    <text evidence="1">Belongs to the intron maturase 2 family. MatK subfamily.</text>
</comment>